<name>FANCF_HUMAN</name>
<organism>
    <name type="scientific">Homo sapiens</name>
    <name type="common">Human</name>
    <dbReference type="NCBI Taxonomy" id="9606"/>
    <lineage>
        <taxon>Eukaryota</taxon>
        <taxon>Metazoa</taxon>
        <taxon>Chordata</taxon>
        <taxon>Craniata</taxon>
        <taxon>Vertebrata</taxon>
        <taxon>Euteleostomi</taxon>
        <taxon>Mammalia</taxon>
        <taxon>Eutheria</taxon>
        <taxon>Euarchontoglires</taxon>
        <taxon>Primates</taxon>
        <taxon>Haplorrhini</taxon>
        <taxon>Catarrhini</taxon>
        <taxon>Hominidae</taxon>
        <taxon>Homo</taxon>
    </lineage>
</organism>
<gene>
    <name type="primary">FANCF</name>
</gene>
<dbReference type="EMBL" id="AF181995">
    <property type="protein sequence ID" value="AAF26298.1"/>
    <property type="molecule type" value="mRNA"/>
</dbReference>
<dbReference type="EMBL" id="AF181994">
    <property type="protein sequence ID" value="AAF26297.1"/>
    <property type="molecule type" value="mRNA"/>
</dbReference>
<dbReference type="EMBL" id="AK023153">
    <property type="protein sequence ID" value="BAB14433.1"/>
    <property type="molecule type" value="mRNA"/>
</dbReference>
<dbReference type="EMBL" id="AY928335">
    <property type="protein sequence ID" value="AAX09677.1"/>
    <property type="molecule type" value="Genomic_DNA"/>
</dbReference>
<dbReference type="EMBL" id="BC047028">
    <property type="protein sequence ID" value="AAH47028.1"/>
    <property type="molecule type" value="mRNA"/>
</dbReference>
<dbReference type="EMBL" id="BC093867">
    <property type="protein sequence ID" value="AAH93867.1"/>
    <property type="molecule type" value="mRNA"/>
</dbReference>
<dbReference type="EMBL" id="BC101807">
    <property type="protein sequence ID" value="AAI01808.1"/>
    <property type="molecule type" value="mRNA"/>
</dbReference>
<dbReference type="CCDS" id="CCDS7857.1"/>
<dbReference type="RefSeq" id="NP_073562.1">
    <property type="nucleotide sequence ID" value="NM_022725.4"/>
</dbReference>
<dbReference type="PDB" id="2IQC">
    <property type="method" value="X-ray"/>
    <property type="resolution" value="2.40 A"/>
    <property type="chains" value="A=156-357"/>
</dbReference>
<dbReference type="PDB" id="7KZP">
    <property type="method" value="EM"/>
    <property type="resolution" value="3.10 A"/>
    <property type="chains" value="F=1-374"/>
</dbReference>
<dbReference type="PDB" id="7KZQ">
    <property type="method" value="EM"/>
    <property type="resolution" value="4.20 A"/>
    <property type="chains" value="F=1-374"/>
</dbReference>
<dbReference type="PDB" id="7KZR">
    <property type="method" value="EM"/>
    <property type="resolution" value="4.20 A"/>
    <property type="chains" value="F=1-374"/>
</dbReference>
<dbReference type="PDB" id="7KZS">
    <property type="method" value="EM"/>
    <property type="resolution" value="4.20 A"/>
    <property type="chains" value="F=1-374"/>
</dbReference>
<dbReference type="PDB" id="7KZT">
    <property type="method" value="EM"/>
    <property type="resolution" value="4.20 A"/>
    <property type="chains" value="F=1-374"/>
</dbReference>
<dbReference type="PDB" id="7KZV">
    <property type="method" value="EM"/>
    <property type="resolution" value="4.20 A"/>
    <property type="chains" value="F=1-374"/>
</dbReference>
<dbReference type="PDBsum" id="2IQC"/>
<dbReference type="PDBsum" id="7KZP"/>
<dbReference type="PDBsum" id="7KZQ"/>
<dbReference type="PDBsum" id="7KZR"/>
<dbReference type="PDBsum" id="7KZS"/>
<dbReference type="PDBsum" id="7KZT"/>
<dbReference type="PDBsum" id="7KZV"/>
<dbReference type="EMDB" id="EMD-23085"/>
<dbReference type="EMDB" id="EMD-23086"/>
<dbReference type="EMDB" id="EMD-23087"/>
<dbReference type="EMDB" id="EMD-23088"/>
<dbReference type="EMDB" id="EMD-23089"/>
<dbReference type="EMDB" id="EMD-23090"/>
<dbReference type="SMR" id="Q9NPI8"/>
<dbReference type="BioGRID" id="108483">
    <property type="interactions" value="26"/>
</dbReference>
<dbReference type="ComplexPortal" id="CPX-6263">
    <property type="entry name" value="Fanconi anemia ubiquitin ligase complex"/>
</dbReference>
<dbReference type="CORUM" id="Q9NPI8"/>
<dbReference type="FunCoup" id="Q9NPI8">
    <property type="interactions" value="108"/>
</dbReference>
<dbReference type="IntAct" id="Q9NPI8">
    <property type="interactions" value="12"/>
</dbReference>
<dbReference type="MINT" id="Q9NPI8"/>
<dbReference type="STRING" id="9606.ENSP00000330875"/>
<dbReference type="BindingDB" id="Q9NPI8"/>
<dbReference type="ChEMBL" id="CHEMBL2157856"/>
<dbReference type="MoonDB" id="Q9NPI8">
    <property type="type" value="Predicted"/>
</dbReference>
<dbReference type="iPTMnet" id="Q9NPI8"/>
<dbReference type="PhosphoSitePlus" id="Q9NPI8"/>
<dbReference type="BioMuta" id="FANCF"/>
<dbReference type="DMDM" id="23821547"/>
<dbReference type="jPOST" id="Q9NPI8"/>
<dbReference type="MassIVE" id="Q9NPI8"/>
<dbReference type="PaxDb" id="9606-ENSP00000330875"/>
<dbReference type="PeptideAtlas" id="Q9NPI8"/>
<dbReference type="ProteomicsDB" id="82022"/>
<dbReference type="Pumba" id="Q9NPI8"/>
<dbReference type="Antibodypedia" id="25340">
    <property type="antibodies" value="182 antibodies from 27 providers"/>
</dbReference>
<dbReference type="DNASU" id="2188"/>
<dbReference type="Ensembl" id="ENST00000327470.6">
    <property type="protein sequence ID" value="ENSP00000330875.3"/>
    <property type="gene ID" value="ENSG00000183161.6"/>
</dbReference>
<dbReference type="GeneID" id="2188"/>
<dbReference type="KEGG" id="hsa:2188"/>
<dbReference type="MANE-Select" id="ENST00000327470.6">
    <property type="protein sequence ID" value="ENSP00000330875.3"/>
    <property type="RefSeq nucleotide sequence ID" value="NM_022725.4"/>
    <property type="RefSeq protein sequence ID" value="NP_073562.1"/>
</dbReference>
<dbReference type="UCSC" id="uc001mql.2">
    <property type="organism name" value="human"/>
</dbReference>
<dbReference type="AGR" id="HGNC:3587"/>
<dbReference type="CTD" id="2188"/>
<dbReference type="DisGeNET" id="2188"/>
<dbReference type="GeneCards" id="FANCF"/>
<dbReference type="GeneReviews" id="FANCF"/>
<dbReference type="HGNC" id="HGNC:3587">
    <property type="gene designation" value="FANCF"/>
</dbReference>
<dbReference type="HPA" id="ENSG00000183161">
    <property type="expression patterns" value="Low tissue specificity"/>
</dbReference>
<dbReference type="MalaCards" id="FANCF"/>
<dbReference type="MIM" id="603467">
    <property type="type" value="phenotype"/>
</dbReference>
<dbReference type="MIM" id="613897">
    <property type="type" value="gene"/>
</dbReference>
<dbReference type="neXtProt" id="NX_Q9NPI8"/>
<dbReference type="OpenTargets" id="ENSG00000183161"/>
<dbReference type="Orphanet" id="84">
    <property type="disease" value="Fanconi anemia"/>
</dbReference>
<dbReference type="PharmGKB" id="PA28001"/>
<dbReference type="VEuPathDB" id="HostDB:ENSG00000183161"/>
<dbReference type="eggNOG" id="ENOG502S2Z3">
    <property type="taxonomic scope" value="Eukaryota"/>
</dbReference>
<dbReference type="GeneTree" id="ENSGT00390000005623"/>
<dbReference type="HOGENOM" id="CLU_770617_0_0_1"/>
<dbReference type="InParanoid" id="Q9NPI8"/>
<dbReference type="OMA" id="LQWARYL"/>
<dbReference type="OrthoDB" id="6429998at2759"/>
<dbReference type="PAN-GO" id="Q9NPI8">
    <property type="GO annotations" value="2 GO annotations based on evolutionary models"/>
</dbReference>
<dbReference type="PhylomeDB" id="Q9NPI8"/>
<dbReference type="TreeFam" id="TF332957"/>
<dbReference type="PathwayCommons" id="Q9NPI8"/>
<dbReference type="Reactome" id="R-HSA-6783310">
    <property type="pathway name" value="Fanconi Anemia Pathway"/>
</dbReference>
<dbReference type="Reactome" id="R-HSA-9833482">
    <property type="pathway name" value="PKR-mediated signaling"/>
</dbReference>
<dbReference type="SignaLink" id="Q9NPI8"/>
<dbReference type="SIGNOR" id="Q9NPI8"/>
<dbReference type="BioGRID-ORCS" id="2188">
    <property type="hits" value="153 hits in 1164 CRISPR screens"/>
</dbReference>
<dbReference type="ChiTaRS" id="FANCF">
    <property type="organism name" value="human"/>
</dbReference>
<dbReference type="EvolutionaryTrace" id="Q9NPI8"/>
<dbReference type="GeneWiki" id="FANCF"/>
<dbReference type="GenomeRNAi" id="2188"/>
<dbReference type="Pharos" id="Q9NPI8">
    <property type="development level" value="Tchem"/>
</dbReference>
<dbReference type="PRO" id="PR:Q9NPI8"/>
<dbReference type="Proteomes" id="UP000005640">
    <property type="component" value="Chromosome 11"/>
</dbReference>
<dbReference type="RNAct" id="Q9NPI8">
    <property type="molecule type" value="protein"/>
</dbReference>
<dbReference type="Bgee" id="ENSG00000183161">
    <property type="expression patterns" value="Expressed in secondary oocyte and 157 other cell types or tissues"/>
</dbReference>
<dbReference type="ExpressionAtlas" id="Q9NPI8">
    <property type="expression patterns" value="baseline and differential"/>
</dbReference>
<dbReference type="GO" id="GO:0000785">
    <property type="term" value="C:chromatin"/>
    <property type="evidence" value="ECO:0000314"/>
    <property type="project" value="ComplexPortal"/>
</dbReference>
<dbReference type="GO" id="GO:0005829">
    <property type="term" value="C:cytosol"/>
    <property type="evidence" value="ECO:0000304"/>
    <property type="project" value="Reactome"/>
</dbReference>
<dbReference type="GO" id="GO:0043240">
    <property type="term" value="C:Fanconi anaemia nuclear complex"/>
    <property type="evidence" value="ECO:0000314"/>
    <property type="project" value="UniProtKB"/>
</dbReference>
<dbReference type="GO" id="GO:0005654">
    <property type="term" value="C:nucleoplasm"/>
    <property type="evidence" value="ECO:0000314"/>
    <property type="project" value="HPA"/>
</dbReference>
<dbReference type="GO" id="GO:0006974">
    <property type="term" value="P:DNA damage response"/>
    <property type="evidence" value="ECO:0000318"/>
    <property type="project" value="GO_Central"/>
</dbReference>
<dbReference type="GO" id="GO:0036297">
    <property type="term" value="P:interstrand cross-link repair"/>
    <property type="evidence" value="ECO:0000303"/>
    <property type="project" value="ComplexPortal"/>
</dbReference>
<dbReference type="DisProt" id="DP02782"/>
<dbReference type="FunFam" id="1.25.40.490:FF:000001">
    <property type="entry name" value="Fanconi anemia, complementation group F"/>
    <property type="match status" value="1"/>
</dbReference>
<dbReference type="Gene3D" id="1.25.40.490">
    <property type="match status" value="1"/>
</dbReference>
<dbReference type="InterPro" id="IPR035428">
    <property type="entry name" value="FANCF"/>
</dbReference>
<dbReference type="InterPro" id="IPR038505">
    <property type="entry name" value="FANCF_C_sf"/>
</dbReference>
<dbReference type="PANTHER" id="PTHR14449:SF2">
    <property type="entry name" value="FANCONI ANEMIA GROUP F PROTEIN"/>
    <property type="match status" value="1"/>
</dbReference>
<dbReference type="PANTHER" id="PTHR14449">
    <property type="entry name" value="FANCONI ANEMIA GROUP F PROTEIN FANCF"/>
    <property type="match status" value="1"/>
</dbReference>
<dbReference type="Pfam" id="PF11107">
    <property type="entry name" value="FANCF"/>
    <property type="match status" value="1"/>
</dbReference>
<protein>
    <recommendedName>
        <fullName>Fanconi anemia group F protein</fullName>
        <shortName>Protein FACF</shortName>
    </recommendedName>
</protein>
<evidence type="ECO:0000250" key="1"/>
<evidence type="ECO:0000269" key="2">
    <source>
    </source>
</evidence>
<evidence type="ECO:0000269" key="3">
    <source>
    </source>
</evidence>
<evidence type="ECO:0000269" key="4">
    <source>
    </source>
</evidence>
<evidence type="ECO:0000269" key="5">
    <source>
    </source>
</evidence>
<evidence type="ECO:0000269" key="6">
    <source>
    </source>
</evidence>
<evidence type="ECO:0000269" key="7">
    <source>
    </source>
</evidence>
<evidence type="ECO:0000269" key="8">
    <source>
    </source>
</evidence>
<evidence type="ECO:0000269" key="9">
    <source ref="3"/>
</evidence>
<evidence type="ECO:0007829" key="10">
    <source>
        <dbReference type="PDB" id="2IQC"/>
    </source>
</evidence>
<comment type="function">
    <text evidence="1">DNA repair protein that may operate in a postreplication repair or a cell cycle checkpoint function. May be implicated in interstrand DNA cross-link repair and in the maintenance of normal chromosome stability (By similarity).</text>
</comment>
<comment type="subunit">
    <text evidence="3 4 5 6 7 8">Belongs to the multisubunit FA complex composed of FANCA, FANCB, FANCC, FANCE, FANCF, FANCG, FANCL/PHF9 and FANCM. The complex is not found in FA patients. In complex with FANCA, FANCG and FANCL, but not with FANCC, nor FANCE, interacts with HES1; this interaction may be essential for the stability and nuclear localization of FA core complex proteins.</text>
</comment>
<comment type="interaction">
    <interactant intactId="EBI-81589">
        <id>Q9NPI8</id>
    </interactant>
    <interactant intactId="EBI-81570">
        <id>O15360</id>
        <label>FANCA</label>
    </interactant>
    <organismsDiffer>false</organismsDiffer>
    <experiments>5</experiments>
</comment>
<comment type="interaction">
    <interactant intactId="EBI-81589">
        <id>Q9NPI8</id>
    </interactant>
    <interactant intactId="EBI-81610">
        <id>O15287</id>
        <label>FANCG</label>
    </interactant>
    <organismsDiffer>false</organismsDiffer>
    <experiments>4</experiments>
</comment>
<comment type="interaction">
    <interactant intactId="EBI-81589">
        <id>Q9NPI8</id>
    </interactant>
    <interactant intactId="EBI-466029">
        <id>P42858</id>
        <label>HTT</label>
    </interactant>
    <organismsDiffer>false</organismsDiffer>
    <experiments>3</experiments>
</comment>
<comment type="interaction">
    <interactant intactId="EBI-81589">
        <id>Q9NPI8</id>
    </interactant>
    <interactant intactId="EBI-17721485">
        <id>Q8WWU5-7</id>
        <label>TCP11</label>
    </interactant>
    <organismsDiffer>false</organismsDiffer>
    <experiments>3</experiments>
</comment>
<comment type="subcellular location">
    <subcellularLocation>
        <location evidence="3 8">Nucleus</location>
    </subcellularLocation>
</comment>
<comment type="disease" evidence="2">
    <disease id="DI-03058">
        <name>Fanconi anemia complementation group F</name>
        <acronym>FANCF</acronym>
        <description>A disorder affecting all bone marrow elements and resulting in anemia, leukopenia and thrombopenia. It is associated with cardiac, renal and limb malformations, dermal pigmentary changes, and a predisposition to the development of malignancies. At the cellular level it is associated with hypersensitivity to DNA-damaging agents, chromosomal instability (increased chromosome breakage) and defective DNA repair.</description>
        <dbReference type="MIM" id="603467"/>
    </disease>
    <text>The disease is caused by variants affecting the gene represented in this entry.</text>
</comment>
<comment type="online information" name="Atlas of Genetics and Cytogenetics in Oncology and Haematology">
    <link uri="https://atlasgeneticsoncology.org/gene/294/FANCF"/>
</comment>
<comment type="online information" name="Fanconi Anemia Mutation Database">
    <link uri="https://www2.rockefeller.edu/fanconi/genes/jumpf"/>
</comment>
<keyword id="KW-0002">3D-structure</keyword>
<keyword id="KW-0903">Direct protein sequencing</keyword>
<keyword id="KW-0227">DNA damage</keyword>
<keyword id="KW-0234">DNA repair</keyword>
<keyword id="KW-0923">Fanconi anemia</keyword>
<keyword id="KW-0539">Nucleus</keyword>
<keyword id="KW-1267">Proteomics identification</keyword>
<keyword id="KW-1185">Reference proteome</keyword>
<proteinExistence type="evidence at protein level"/>
<reference key="1">
    <citation type="journal article" date="2000" name="Nat. Genet.">
        <title>The Fanconi anaemia gene FANCF encodes a novel protein with homology to ROM.</title>
        <authorList>
            <person name="de Winter J.P."/>
            <person name="Rooimans M.A."/>
            <person name="van der Weel L."/>
            <person name="van Berkel C.G.M."/>
            <person name="de Groot J."/>
            <person name="Waisfisz Q."/>
            <person name="Pronk J.C."/>
            <person name="Arwert F."/>
            <person name="Mathew C.G."/>
            <person name="Scheper R.J."/>
            <person name="Hoatlin M.E."/>
            <person name="Buchwald M."/>
            <person name="Joenje H."/>
        </authorList>
    </citation>
    <scope>NUCLEOTIDE SEQUENCE [MRNA]</scope>
    <scope>INVOLVEMENT IN FANCF</scope>
</reference>
<reference key="2">
    <citation type="journal article" date="2004" name="Nat. Genet.">
        <title>Complete sequencing and characterization of 21,243 full-length human cDNAs.</title>
        <authorList>
            <person name="Ota T."/>
            <person name="Suzuki Y."/>
            <person name="Nishikawa T."/>
            <person name="Otsuki T."/>
            <person name="Sugiyama T."/>
            <person name="Irie R."/>
            <person name="Wakamatsu A."/>
            <person name="Hayashi K."/>
            <person name="Sato H."/>
            <person name="Nagai K."/>
            <person name="Kimura K."/>
            <person name="Makita H."/>
            <person name="Sekine M."/>
            <person name="Obayashi M."/>
            <person name="Nishi T."/>
            <person name="Shibahara T."/>
            <person name="Tanaka T."/>
            <person name="Ishii S."/>
            <person name="Yamamoto J."/>
            <person name="Saito K."/>
            <person name="Kawai Y."/>
            <person name="Isono Y."/>
            <person name="Nakamura Y."/>
            <person name="Nagahari K."/>
            <person name="Murakami K."/>
            <person name="Yasuda T."/>
            <person name="Iwayanagi T."/>
            <person name="Wagatsuma M."/>
            <person name="Shiratori A."/>
            <person name="Sudo H."/>
            <person name="Hosoiri T."/>
            <person name="Kaku Y."/>
            <person name="Kodaira H."/>
            <person name="Kondo H."/>
            <person name="Sugawara M."/>
            <person name="Takahashi M."/>
            <person name="Kanda K."/>
            <person name="Yokoi T."/>
            <person name="Furuya T."/>
            <person name="Kikkawa E."/>
            <person name="Omura Y."/>
            <person name="Abe K."/>
            <person name="Kamihara K."/>
            <person name="Katsuta N."/>
            <person name="Sato K."/>
            <person name="Tanikawa M."/>
            <person name="Yamazaki M."/>
            <person name="Ninomiya K."/>
            <person name="Ishibashi T."/>
            <person name="Yamashita H."/>
            <person name="Murakawa K."/>
            <person name="Fujimori K."/>
            <person name="Tanai H."/>
            <person name="Kimata M."/>
            <person name="Watanabe M."/>
            <person name="Hiraoka S."/>
            <person name="Chiba Y."/>
            <person name="Ishida S."/>
            <person name="Ono Y."/>
            <person name="Takiguchi S."/>
            <person name="Watanabe S."/>
            <person name="Yosida M."/>
            <person name="Hotuta T."/>
            <person name="Kusano J."/>
            <person name="Kanehori K."/>
            <person name="Takahashi-Fujii A."/>
            <person name="Hara H."/>
            <person name="Tanase T.-O."/>
            <person name="Nomura Y."/>
            <person name="Togiya S."/>
            <person name="Komai F."/>
            <person name="Hara R."/>
            <person name="Takeuchi K."/>
            <person name="Arita M."/>
            <person name="Imose N."/>
            <person name="Musashino K."/>
            <person name="Yuuki H."/>
            <person name="Oshima A."/>
            <person name="Sasaki N."/>
            <person name="Aotsuka S."/>
            <person name="Yoshikawa Y."/>
            <person name="Matsunawa H."/>
            <person name="Ichihara T."/>
            <person name="Shiohata N."/>
            <person name="Sano S."/>
            <person name="Moriya S."/>
            <person name="Momiyama H."/>
            <person name="Satoh N."/>
            <person name="Takami S."/>
            <person name="Terashima Y."/>
            <person name="Suzuki O."/>
            <person name="Nakagawa S."/>
            <person name="Senoh A."/>
            <person name="Mizoguchi H."/>
            <person name="Goto Y."/>
            <person name="Shimizu F."/>
            <person name="Wakebe H."/>
            <person name="Hishigaki H."/>
            <person name="Watanabe T."/>
            <person name="Sugiyama A."/>
            <person name="Takemoto M."/>
            <person name="Kawakami B."/>
            <person name="Yamazaki M."/>
            <person name="Watanabe K."/>
            <person name="Kumagai A."/>
            <person name="Itakura S."/>
            <person name="Fukuzumi Y."/>
            <person name="Fujimori Y."/>
            <person name="Komiyama M."/>
            <person name="Tashiro H."/>
            <person name="Tanigami A."/>
            <person name="Fujiwara T."/>
            <person name="Ono T."/>
            <person name="Yamada K."/>
            <person name="Fujii Y."/>
            <person name="Ozaki K."/>
            <person name="Hirao M."/>
            <person name="Ohmori Y."/>
            <person name="Kawabata A."/>
            <person name="Hikiji T."/>
            <person name="Kobatake N."/>
            <person name="Inagaki H."/>
            <person name="Ikema Y."/>
            <person name="Okamoto S."/>
            <person name="Okitani R."/>
            <person name="Kawakami T."/>
            <person name="Noguchi S."/>
            <person name="Itoh T."/>
            <person name="Shigeta K."/>
            <person name="Senba T."/>
            <person name="Matsumura K."/>
            <person name="Nakajima Y."/>
            <person name="Mizuno T."/>
            <person name="Morinaga M."/>
            <person name="Sasaki M."/>
            <person name="Togashi T."/>
            <person name="Oyama M."/>
            <person name="Hata H."/>
            <person name="Watanabe M."/>
            <person name="Komatsu T."/>
            <person name="Mizushima-Sugano J."/>
            <person name="Satoh T."/>
            <person name="Shirai Y."/>
            <person name="Takahashi Y."/>
            <person name="Nakagawa K."/>
            <person name="Okumura K."/>
            <person name="Nagase T."/>
            <person name="Nomura N."/>
            <person name="Kikuchi H."/>
            <person name="Masuho Y."/>
            <person name="Yamashita R."/>
            <person name="Nakai K."/>
            <person name="Yada T."/>
            <person name="Nakamura Y."/>
            <person name="Ohara O."/>
            <person name="Isogai T."/>
            <person name="Sugano S."/>
        </authorList>
    </citation>
    <scope>NUCLEOTIDE SEQUENCE [LARGE SCALE MRNA]</scope>
</reference>
<reference key="3">
    <citation type="submission" date="2005-02" db="EMBL/GenBank/DDBJ databases">
        <authorList>
            <consortium name="NIEHS SNPs program"/>
        </authorList>
    </citation>
    <scope>NUCLEOTIDE SEQUENCE [GENOMIC DNA]</scope>
    <scope>VARIANT LEU-320</scope>
</reference>
<reference key="4">
    <citation type="journal article" date="2004" name="Genome Res.">
        <title>The status, quality, and expansion of the NIH full-length cDNA project: the Mammalian Gene Collection (MGC).</title>
        <authorList>
            <consortium name="The MGC Project Team"/>
        </authorList>
    </citation>
    <scope>NUCLEOTIDE SEQUENCE [LARGE SCALE MRNA]</scope>
    <source>
        <tissue>Brain</tissue>
        <tissue>Skin</tissue>
    </source>
</reference>
<reference key="5">
    <citation type="journal article" date="2007" name="J. Biol. Chem.">
        <title>Structural determinants of human FANCF protein that function in the assembly of a DNA damage signaling complex.</title>
        <authorList>
            <person name="Kowal P."/>
            <person name="Gurtan A.M."/>
            <person name="Stuckert P."/>
            <person name="D'Andrea A.D."/>
            <person name="Ellenberger T."/>
        </authorList>
    </citation>
    <scope>PARTIAL PROTEIN SEQUENCE</scope>
    <scope>IDENTIFICATION BY MASS SPECTROMETRY</scope>
    <scope>X-RAY CRYSTALLOGRAPHY (2.4 ANGSTROMS) OF 156-357</scope>
    <scope>MUTAGENESIS OF LEU-209; PHE-251; TYR-287; LEU-289; PHE-339; VAL-341 AND LEU-344</scope>
    <scope>SUBUNIT</scope>
</reference>
<reference key="6">
    <citation type="journal article" date="2000" name="Hum. Mol. Genet.">
        <title>The Fanconi anemia protein FANCF forms a nuclear complex with FANCA, FANCC and FANCG.</title>
        <authorList>
            <person name="de Winter J.P."/>
            <person name="van der Weel L."/>
            <person name="de Groot J."/>
            <person name="Stone S."/>
            <person name="Waisfisz Q."/>
            <person name="Arwert F."/>
            <person name="Scheper R.J."/>
            <person name="Kruyt F.A.E."/>
            <person name="Hoatlin M.E."/>
            <person name="Joenje H."/>
        </authorList>
    </citation>
    <scope>SUBUNIT</scope>
    <scope>SUBCELLULAR LOCATION</scope>
</reference>
<reference key="7">
    <citation type="journal article" date="2003" name="Mol. Cell. Biol.">
        <title>A multiprotein nuclear complex connects Fanconi anemia and Bloom syndrome.</title>
        <authorList>
            <person name="Meetei A.R."/>
            <person name="Sechi S."/>
            <person name="Wallisch M."/>
            <person name="Yang D."/>
            <person name="Young M.K."/>
            <person name="Joenje H."/>
            <person name="Hoatlin M.E."/>
            <person name="Wang W."/>
        </authorList>
    </citation>
    <scope>IDENTIFICATION IN A COMPLEX WITH FANCA; FANCC; FANCE; FANCG AND FANCL</scope>
</reference>
<reference key="8">
    <citation type="journal article" date="2004" name="Nat. Genet.">
        <title>X-linked inheritance of Fanconi anemia complementation group B.</title>
        <authorList>
            <person name="Meetei A.R."/>
            <person name="Levitus M."/>
            <person name="Xue Y."/>
            <person name="Medhurst A.L."/>
            <person name="Zwaan M."/>
            <person name="Ling C."/>
            <person name="Rooimans M.A."/>
            <person name="Bier P."/>
            <person name="Hoatlin M."/>
            <person name="Pals G."/>
            <person name="de Winter J.P."/>
            <person name="Wang W."/>
            <person name="Joenje H."/>
        </authorList>
    </citation>
    <scope>IDENTIFICATION IN A COMPLEX WITH FANCA; FANCB; FANCC; FANCE; FANCG AND FANCL</scope>
</reference>
<reference key="9">
    <citation type="journal article" date="2005" name="Nat. Genet.">
        <title>A human ortholog of archaeal DNA repair protein Hef is defective in Fanconi anemia complementation group M.</title>
        <authorList>
            <person name="Meetei A.R."/>
            <person name="Medhurst A.L."/>
            <person name="Ling C."/>
            <person name="Xue Y."/>
            <person name="Singh T.R."/>
            <person name="Bier P."/>
            <person name="Steltenpool J."/>
            <person name="Stone S."/>
            <person name="Dokal I."/>
            <person name="Mathew C.G."/>
            <person name="Hoatlin M."/>
            <person name="Joenje H."/>
            <person name="de Winter J.P."/>
            <person name="Wang W."/>
        </authorList>
    </citation>
    <scope>IDENTIFICATION IN A COMPLEX WITH FANCA; FANCB; FANCC; FANCE; FANCG; FANCL AND FANCM</scope>
</reference>
<reference key="10">
    <citation type="journal article" date="2008" name="Blood">
        <title>HES1 is a novel interactor of the Fanconi anemia core complex.</title>
        <authorList>
            <person name="Tremblay C.S."/>
            <person name="Huang F.F."/>
            <person name="Habi O."/>
            <person name="Huard C.C."/>
            <person name="Godin C."/>
            <person name="Levesque G."/>
            <person name="Carreau M."/>
        </authorList>
    </citation>
    <scope>INTERACTION WITH HES1</scope>
    <scope>SUBCELLULAR LOCATION</scope>
</reference>
<feature type="chain" id="PRO_0000087188" description="Fanconi anemia group F protein">
    <location>
        <begin position="1"/>
        <end position="374"/>
    </location>
</feature>
<feature type="sequence variant" id="VAR_050988" description="In dbSNP:rs7103293.">
    <original>V</original>
    <variation>I</variation>
    <location>
        <position position="295"/>
    </location>
</feature>
<feature type="sequence variant" id="VAR_022270" description="In dbSNP:rs45451294." evidence="9">
    <original>P</original>
    <variation>L</variation>
    <location>
        <position position="320"/>
    </location>
</feature>
<feature type="mutagenesis site" description="Reduced monoubiquitination of FANCD2." evidence="7">
    <original>L</original>
    <variation>R</variation>
    <location>
        <position position="209"/>
    </location>
</feature>
<feature type="mutagenesis site" description="Reduced monoubiquitination of FANCD2." evidence="7">
    <original>F</original>
    <variation>R</variation>
    <location>
        <position position="251"/>
    </location>
</feature>
<feature type="mutagenesis site" description="Strongly reduced monoubiquitination of FANCD2; when associated with A-289; A-339; A-341 and A-344." evidence="7">
    <original>Y</original>
    <variation>A</variation>
    <location>
        <position position="287"/>
    </location>
</feature>
<feature type="mutagenesis site" description="Strongly reduced monoubiquitination of FANCD2; when associated with A-287; A-339; A-341 and A-344." evidence="7">
    <original>L</original>
    <variation>A</variation>
    <location>
        <position position="289"/>
    </location>
</feature>
<feature type="mutagenesis site" description="Strongly reduced monoubiquitination of FANCD2; when associated with A-287; A-289; A-341 and A-344." evidence="7">
    <original>F</original>
    <variation>A</variation>
    <location>
        <position position="339"/>
    </location>
</feature>
<feature type="mutagenesis site" description="Strongly reduced monoubiquitination of FANCD2; when associated with A-287; A-289; A-339 and A-344." evidence="7">
    <original>V</original>
    <variation>A</variation>
    <location>
        <position position="341"/>
    </location>
</feature>
<feature type="mutagenesis site" description="Strongly reduced monoubiquitination of FANCD2; when associated with A-287; A-289; A-339 and A-341." evidence="7">
    <original>L</original>
    <variation>A</variation>
    <location>
        <position position="344"/>
    </location>
</feature>
<feature type="helix" evidence="10">
    <location>
        <begin position="160"/>
        <end position="174"/>
    </location>
</feature>
<feature type="helix" evidence="10">
    <location>
        <begin position="186"/>
        <end position="195"/>
    </location>
</feature>
<feature type="helix" evidence="10">
    <location>
        <begin position="198"/>
        <end position="209"/>
    </location>
</feature>
<feature type="helix" evidence="10">
    <location>
        <begin position="235"/>
        <end position="243"/>
    </location>
</feature>
<feature type="helix" evidence="10">
    <location>
        <begin position="245"/>
        <end position="254"/>
    </location>
</feature>
<feature type="helix" evidence="10">
    <location>
        <begin position="257"/>
        <end position="266"/>
    </location>
</feature>
<feature type="helix" evidence="10">
    <location>
        <begin position="268"/>
        <end position="270"/>
    </location>
</feature>
<feature type="helix" evidence="10">
    <location>
        <begin position="271"/>
        <end position="283"/>
    </location>
</feature>
<feature type="strand" evidence="10">
    <location>
        <begin position="286"/>
        <end position="288"/>
    </location>
</feature>
<feature type="turn" evidence="10">
    <location>
        <begin position="289"/>
        <end position="292"/>
    </location>
</feature>
<feature type="strand" evidence="10">
    <location>
        <begin position="293"/>
        <end position="295"/>
    </location>
</feature>
<feature type="helix" evidence="10">
    <location>
        <begin position="304"/>
        <end position="315"/>
    </location>
</feature>
<feature type="helix" evidence="10">
    <location>
        <begin position="319"/>
        <end position="335"/>
    </location>
</feature>
<feature type="helix" evidence="10">
    <location>
        <begin position="346"/>
        <end position="354"/>
    </location>
</feature>
<sequence>MESLLQHLDRFSELLAVSSTTYVSTWDPATVRRALQWARYLRHIHRRFGRHGPIRTALERRLHNQWRQEGGFGRGPVPGLANFQALGHCDVLLSLRLLENRALGDAARYHLVQQLFPGPGVRDADEETLQESLARLARRRSAVHMLRFNGYRENPNLQEDSLMKTQAELLLERLQEVGKAEAERPARFLSSLWERLPQNNFLKVIAVALLQPPLSRRPQEELEPGIHKSPGEGSQVLVHWLLGNSEVFAAFCRALPAGLLTLVTSRHPALSPVYLGLLTDWGQRLHYDLQKGIWVGTESQDVPWEELHNRFQSLCQAPPPLKDKVLTALETCKAQDGDFEVPGLSIWTDLLLALRSGAFRKRQVLGLSAGLSSV</sequence>
<accession>Q9NPI8</accession>
<accession>Q52LM0</accession>